<feature type="chain" id="PRO_0000211349" description="Transposase for insertion sequence element IS1081">
    <location>
        <begin position="1"/>
        <end position="415"/>
    </location>
</feature>
<dbReference type="EMBL" id="X61270">
    <property type="protein sequence ID" value="CAA43574.1"/>
    <property type="molecule type" value="Genomic_DNA"/>
</dbReference>
<dbReference type="EMBL" id="LT708304">
    <property type="protein sequence ID" value="SIT99675.1"/>
    <property type="molecule type" value="Genomic_DNA"/>
</dbReference>
<dbReference type="EMBL" id="LT708304">
    <property type="protein sequence ID" value="SIT99832.1"/>
    <property type="molecule type" value="Genomic_DNA"/>
</dbReference>
<dbReference type="EMBL" id="LT708304">
    <property type="protein sequence ID" value="SIU01156.1"/>
    <property type="molecule type" value="Genomic_DNA"/>
</dbReference>
<dbReference type="EMBL" id="LT708304">
    <property type="protein sequence ID" value="SIU01673.1"/>
    <property type="molecule type" value="Genomic_DNA"/>
</dbReference>
<dbReference type="EMBL" id="LT708304">
    <property type="protein sequence ID" value="SIU01768.1"/>
    <property type="molecule type" value="Genomic_DNA"/>
</dbReference>
<dbReference type="PIR" id="A54550">
    <property type="entry name" value="A54550"/>
</dbReference>
<dbReference type="RefSeq" id="NP_854731.1">
    <property type="nucleotide sequence ID" value="NC_002945.3"/>
</dbReference>
<dbReference type="RefSeq" id="NP_854885.1">
    <property type="nucleotide sequence ID" value="NC_002945.3"/>
</dbReference>
<dbReference type="RefSeq" id="NP_856185.1">
    <property type="nucleotide sequence ID" value="NC_002945.3"/>
</dbReference>
<dbReference type="RefSeq" id="NP_856694.1">
    <property type="nucleotide sequence ID" value="NC_002945.3"/>
</dbReference>
<dbReference type="RefSeq" id="NP_856787.1">
    <property type="nucleotide sequence ID" value="NC_002945.3"/>
</dbReference>
<dbReference type="RefSeq" id="WP_003904572.1">
    <property type="nucleotide sequence ID" value="NC_002945.4"/>
</dbReference>
<dbReference type="SMR" id="P60231"/>
<dbReference type="KEGG" id="mbo:BQ2027_MB1076"/>
<dbReference type="KEGG" id="mbo:BQ2027_MB1231C"/>
<dbReference type="KEGG" id="mbo:BQ2027_MB2540C"/>
<dbReference type="KEGG" id="mbo:BQ2027_MB3049C"/>
<dbReference type="KEGG" id="mbo:BQ2027_MB3142"/>
<dbReference type="PATRIC" id="fig|233413.5.peg.1170"/>
<dbReference type="Proteomes" id="UP000001419">
    <property type="component" value="Chromosome"/>
</dbReference>
<dbReference type="GO" id="GO:0003677">
    <property type="term" value="F:DNA binding"/>
    <property type="evidence" value="ECO:0007669"/>
    <property type="project" value="UniProtKB-KW"/>
</dbReference>
<dbReference type="GO" id="GO:0004803">
    <property type="term" value="F:transposase activity"/>
    <property type="evidence" value="ECO:0007669"/>
    <property type="project" value="InterPro"/>
</dbReference>
<dbReference type="GO" id="GO:0006313">
    <property type="term" value="P:DNA transposition"/>
    <property type="evidence" value="ECO:0007669"/>
    <property type="project" value="InterPro"/>
</dbReference>
<dbReference type="InterPro" id="IPR001207">
    <property type="entry name" value="Transposase_mutator"/>
</dbReference>
<dbReference type="NCBIfam" id="NF033543">
    <property type="entry name" value="transpos_IS256"/>
    <property type="match status" value="1"/>
</dbReference>
<dbReference type="PANTHER" id="PTHR33217">
    <property type="entry name" value="TRANSPOSASE FOR INSERTION SEQUENCE ELEMENT IS1081"/>
    <property type="match status" value="1"/>
</dbReference>
<dbReference type="PANTHER" id="PTHR33217:SF7">
    <property type="entry name" value="TRANSPOSASE FOR INSERTION SEQUENCE ELEMENT IS1081"/>
    <property type="match status" value="1"/>
</dbReference>
<dbReference type="Pfam" id="PF00872">
    <property type="entry name" value="Transposase_mut"/>
    <property type="match status" value="1"/>
</dbReference>
<dbReference type="PROSITE" id="PS01007">
    <property type="entry name" value="TRANSPOSASE_MUTATOR"/>
    <property type="match status" value="1"/>
</dbReference>
<reference key="1">
    <citation type="journal article" date="1991" name="FEMS Microbiol. Lett.">
        <title>Identification of an insertion sequence, IS1081, in Mycobacterium bovis.</title>
        <authorList>
            <person name="Collins D.M."/>
            <person name="Stephens D.M."/>
        </authorList>
    </citation>
    <scope>NUCLEOTIDE SEQUENCE [GENOMIC DNA]</scope>
    <source>
        <strain>ATCC 19210 / NCTC 10772 / TMC 410</strain>
    </source>
</reference>
<reference key="2">
    <citation type="journal article" date="2003" name="Proc. Natl. Acad. Sci. U.S.A.">
        <title>The complete genome sequence of Mycobacterium bovis.</title>
        <authorList>
            <person name="Garnier T."/>
            <person name="Eiglmeier K."/>
            <person name="Camus J.-C."/>
            <person name="Medina N."/>
            <person name="Mansoor H."/>
            <person name="Pryor M."/>
            <person name="Duthoy S."/>
            <person name="Grondin S."/>
            <person name="Lacroix C."/>
            <person name="Monsempe C."/>
            <person name="Simon S."/>
            <person name="Harris B."/>
            <person name="Atkin R."/>
            <person name="Doggett J."/>
            <person name="Mayes R."/>
            <person name="Keating L."/>
            <person name="Wheeler P.R."/>
            <person name="Parkhill J."/>
            <person name="Barrell B.G."/>
            <person name="Cole S.T."/>
            <person name="Gordon S.V."/>
            <person name="Hewinson R.G."/>
        </authorList>
    </citation>
    <scope>NUCLEOTIDE SEQUENCE [LARGE SCALE GENOMIC DNA]</scope>
    <source>
        <strain>ATCC BAA-935 / AF2122/97</strain>
    </source>
</reference>
<reference key="3">
    <citation type="journal article" date="2017" name="Genome Announc.">
        <title>Updated reference genome sequence and annotation of Mycobacterium bovis AF2122/97.</title>
        <authorList>
            <person name="Malone K.M."/>
            <person name="Farrell D."/>
            <person name="Stuber T.P."/>
            <person name="Schubert O.T."/>
            <person name="Aebersold R."/>
            <person name="Robbe-Austerman S."/>
            <person name="Gordon S.V."/>
        </authorList>
    </citation>
    <scope>NUCLEOTIDE SEQUENCE [LARGE SCALE GENOMIC DNA]</scope>
    <scope>GENOME REANNOTATION</scope>
    <source>
        <strain>ATCC BAA-935 / AF2122/97</strain>
    </source>
</reference>
<comment type="function">
    <text>Required for the transposition of the insertion element.</text>
</comment>
<comment type="similarity">
    <text evidence="1">Belongs to the transposase mutator family.</text>
</comment>
<gene>
    <name type="ordered locus">BQ2027_MB1076</name>
</gene>
<gene>
    <name type="ordered locus">BQ2027_MB1231C</name>
</gene>
<gene>
    <name type="ordered locus">BQ2027_MB2540C</name>
</gene>
<gene>
    <name type="ordered locus">BQ2027_MB3049C</name>
</gene>
<gene>
    <name type="ordered locus">BQ2027_MB3142</name>
</gene>
<evidence type="ECO:0000305" key="1"/>
<organism>
    <name type="scientific">Mycobacterium bovis (strain ATCC BAA-935 / AF2122/97)</name>
    <dbReference type="NCBI Taxonomy" id="233413"/>
    <lineage>
        <taxon>Bacteria</taxon>
        <taxon>Bacillati</taxon>
        <taxon>Actinomycetota</taxon>
        <taxon>Actinomycetes</taxon>
        <taxon>Mycobacteriales</taxon>
        <taxon>Mycobacteriaceae</taxon>
        <taxon>Mycobacterium</taxon>
        <taxon>Mycobacterium tuberculosis complex</taxon>
    </lineage>
</organism>
<name>TRA1_MYCBO</name>
<protein>
    <recommendedName>
        <fullName>Transposase for insertion sequence element IS1081</fullName>
    </recommendedName>
</protein>
<proteinExistence type="inferred from homology"/>
<accession>P60231</accession>
<accession>A0A1R3Y293</accession>
<accession>P35882</accession>
<accession>X2BGW7</accession>
<sequence length="415" mass="45810">MTSSHLIDTEQLLADQLAQASPDLLRGLLSTFIAALMGAEADALCGAGYRERSDERSNQRNGYRHRDFDTRAATIDVAIPKLRQGSYFPDWLLQRRKRAERALTSVVATCYLLGVSTRRMERLVETLGVTKLSKSQVSIMAKELDEAVEAFRTRPLDAGPYTFLAADALVLKVREAGRVVGVHTLIATGVNAEGYREILGIQVTSAEDGAGWLAFFRDLVARGLSGVALVTSDAHAGLVAAIGATLPAAAWQRCRTHYAANLMAATPKPSWPWVRTLLHSIYDQPDAESVVAQYDRVLDALTDKLPAVAEHLDTARTDLLAFTAFPKQIWRQIWSNNPQERLNREVRRRTDVVGIFPDRASIIRLVGAVLAEQHDEWIEGRRYLGLEVLTRARAALTSTEEPAKQQTTNTPALTT</sequence>
<keyword id="KW-0233">DNA recombination</keyword>
<keyword id="KW-0238">DNA-binding</keyword>
<keyword id="KW-1185">Reference proteome</keyword>
<keyword id="KW-0814">Transposable element</keyword>
<keyword id="KW-0815">Transposition</keyword>